<feature type="chain" id="PRO_0000177585" description="Translation initiation factor IF-3">
    <location>
        <begin position="1"/>
        <end position="241"/>
    </location>
</feature>
<feature type="region of interest" description="Disordered" evidence="2">
    <location>
        <begin position="178"/>
        <end position="241"/>
    </location>
</feature>
<feature type="compositionally biased region" description="Basic and acidic residues" evidence="2">
    <location>
        <begin position="180"/>
        <end position="197"/>
    </location>
</feature>
<feature type="compositionally biased region" description="Acidic residues" evidence="2">
    <location>
        <begin position="208"/>
        <end position="229"/>
    </location>
</feature>
<feature type="compositionally biased region" description="Low complexity" evidence="2">
    <location>
        <begin position="230"/>
        <end position="241"/>
    </location>
</feature>
<organism>
    <name type="scientific">Streptomyces avermitilis (strain ATCC 31267 / DSM 46492 / JCM 5070 / NBRC 14893 / NCIMB 12804 / NRRL 8165 / MA-4680)</name>
    <dbReference type="NCBI Taxonomy" id="227882"/>
    <lineage>
        <taxon>Bacteria</taxon>
        <taxon>Bacillati</taxon>
        <taxon>Actinomycetota</taxon>
        <taxon>Actinomycetes</taxon>
        <taxon>Kitasatosporales</taxon>
        <taxon>Streptomycetaceae</taxon>
        <taxon>Streptomyces</taxon>
    </lineage>
</organism>
<accession>Q828D2</accession>
<proteinExistence type="inferred from homology"/>
<sequence>MWCYRGGSISTEPRINDRIRVPEVRLVGPSGEQVGIVPLAKALELAQEYDLDLVEVAASARPPVCKLMDYGKFKYESAMKAREARKNQAHTVIKEMKLRPKIDPHDYDTKKGHVVRFLKQGDKVKITIMFRGREQSRPELGYRLLQRLATDVEDLGFVESSPKQDGRNMIMVLGPHKKKTEAMAEAREAQAARKAEAKANPGRSQNAADEDIPEGELPEGEVPEAETTEAAEAPAEASTEA</sequence>
<dbReference type="EMBL" id="BA000030">
    <property type="protein sequence ID" value="BAC74448.1"/>
    <property type="molecule type" value="Genomic_DNA"/>
</dbReference>
<dbReference type="SMR" id="Q828D2"/>
<dbReference type="KEGG" id="sma:SAVERM_6737"/>
<dbReference type="eggNOG" id="COG0290">
    <property type="taxonomic scope" value="Bacteria"/>
</dbReference>
<dbReference type="HOGENOM" id="CLU_054919_1_2_11"/>
<dbReference type="OrthoDB" id="9806014at2"/>
<dbReference type="Proteomes" id="UP000000428">
    <property type="component" value="Chromosome"/>
</dbReference>
<dbReference type="GO" id="GO:0005829">
    <property type="term" value="C:cytosol"/>
    <property type="evidence" value="ECO:0007669"/>
    <property type="project" value="TreeGrafter"/>
</dbReference>
<dbReference type="GO" id="GO:0016020">
    <property type="term" value="C:membrane"/>
    <property type="evidence" value="ECO:0007669"/>
    <property type="project" value="TreeGrafter"/>
</dbReference>
<dbReference type="GO" id="GO:0043022">
    <property type="term" value="F:ribosome binding"/>
    <property type="evidence" value="ECO:0007669"/>
    <property type="project" value="TreeGrafter"/>
</dbReference>
<dbReference type="GO" id="GO:0003743">
    <property type="term" value="F:translation initiation factor activity"/>
    <property type="evidence" value="ECO:0007669"/>
    <property type="project" value="UniProtKB-UniRule"/>
</dbReference>
<dbReference type="GO" id="GO:0032790">
    <property type="term" value="P:ribosome disassembly"/>
    <property type="evidence" value="ECO:0007669"/>
    <property type="project" value="TreeGrafter"/>
</dbReference>
<dbReference type="FunFam" id="3.10.20.80:FF:000001">
    <property type="entry name" value="Translation initiation factor IF-3"/>
    <property type="match status" value="1"/>
</dbReference>
<dbReference type="FunFam" id="3.30.110.10:FF:000002">
    <property type="entry name" value="Translation initiation factor IF-3"/>
    <property type="match status" value="1"/>
</dbReference>
<dbReference type="Gene3D" id="3.30.110.10">
    <property type="entry name" value="Translation initiation factor 3 (IF-3), C-terminal domain"/>
    <property type="match status" value="1"/>
</dbReference>
<dbReference type="Gene3D" id="3.10.20.80">
    <property type="entry name" value="Translation initiation factor 3 (IF-3), N-terminal domain"/>
    <property type="match status" value="1"/>
</dbReference>
<dbReference type="HAMAP" id="MF_00080">
    <property type="entry name" value="IF_3"/>
    <property type="match status" value="1"/>
</dbReference>
<dbReference type="InterPro" id="IPR036788">
    <property type="entry name" value="T_IF-3_C_sf"/>
</dbReference>
<dbReference type="InterPro" id="IPR036787">
    <property type="entry name" value="T_IF-3_N_sf"/>
</dbReference>
<dbReference type="InterPro" id="IPR001288">
    <property type="entry name" value="Translation_initiation_fac_3"/>
</dbReference>
<dbReference type="InterPro" id="IPR019815">
    <property type="entry name" value="Translation_initiation_fac_3_C"/>
</dbReference>
<dbReference type="InterPro" id="IPR019814">
    <property type="entry name" value="Translation_initiation_fac_3_N"/>
</dbReference>
<dbReference type="NCBIfam" id="TIGR00168">
    <property type="entry name" value="infC"/>
    <property type="match status" value="1"/>
</dbReference>
<dbReference type="PANTHER" id="PTHR10938">
    <property type="entry name" value="TRANSLATION INITIATION FACTOR IF-3"/>
    <property type="match status" value="1"/>
</dbReference>
<dbReference type="PANTHER" id="PTHR10938:SF0">
    <property type="entry name" value="TRANSLATION INITIATION FACTOR IF-3, MITOCHONDRIAL"/>
    <property type="match status" value="1"/>
</dbReference>
<dbReference type="Pfam" id="PF00707">
    <property type="entry name" value="IF3_C"/>
    <property type="match status" value="1"/>
</dbReference>
<dbReference type="Pfam" id="PF05198">
    <property type="entry name" value="IF3_N"/>
    <property type="match status" value="1"/>
</dbReference>
<dbReference type="SUPFAM" id="SSF55200">
    <property type="entry name" value="Translation initiation factor IF3, C-terminal domain"/>
    <property type="match status" value="1"/>
</dbReference>
<dbReference type="SUPFAM" id="SSF54364">
    <property type="entry name" value="Translation initiation factor IF3, N-terminal domain"/>
    <property type="match status" value="1"/>
</dbReference>
<protein>
    <recommendedName>
        <fullName evidence="1">Translation initiation factor IF-3</fullName>
    </recommendedName>
</protein>
<evidence type="ECO:0000255" key="1">
    <source>
        <dbReference type="HAMAP-Rule" id="MF_00080"/>
    </source>
</evidence>
<evidence type="ECO:0000256" key="2">
    <source>
        <dbReference type="SAM" id="MobiDB-lite"/>
    </source>
</evidence>
<comment type="function">
    <text evidence="1">IF-3 binds to the 30S ribosomal subunit and shifts the equilibrium between 70S ribosomes and their 50S and 30S subunits in favor of the free subunits, thus enhancing the availability of 30S subunits on which protein synthesis initiation begins.</text>
</comment>
<comment type="subunit">
    <text evidence="1">Monomer.</text>
</comment>
<comment type="subcellular location">
    <subcellularLocation>
        <location evidence="1">Cytoplasm</location>
    </subcellularLocation>
</comment>
<comment type="similarity">
    <text evidence="1">Belongs to the IF-3 family.</text>
</comment>
<keyword id="KW-0963">Cytoplasm</keyword>
<keyword id="KW-0396">Initiation factor</keyword>
<keyword id="KW-0648">Protein biosynthesis</keyword>
<keyword id="KW-1185">Reference proteome</keyword>
<name>IF3_STRAW</name>
<gene>
    <name evidence="1" type="primary">infC</name>
    <name type="ordered locus">SAV_6737</name>
</gene>
<reference key="1">
    <citation type="journal article" date="2001" name="Proc. Natl. Acad. Sci. U.S.A.">
        <title>Genome sequence of an industrial microorganism Streptomyces avermitilis: deducing the ability of producing secondary metabolites.</title>
        <authorList>
            <person name="Omura S."/>
            <person name="Ikeda H."/>
            <person name="Ishikawa J."/>
            <person name="Hanamoto A."/>
            <person name="Takahashi C."/>
            <person name="Shinose M."/>
            <person name="Takahashi Y."/>
            <person name="Horikawa H."/>
            <person name="Nakazawa H."/>
            <person name="Osonoe T."/>
            <person name="Kikuchi H."/>
            <person name="Shiba T."/>
            <person name="Sakaki Y."/>
            <person name="Hattori M."/>
        </authorList>
    </citation>
    <scope>NUCLEOTIDE SEQUENCE [LARGE SCALE GENOMIC DNA]</scope>
    <source>
        <strain>ATCC 31267 / DSM 46492 / JCM 5070 / NBRC 14893 / NCIMB 12804 / NRRL 8165 / MA-4680</strain>
    </source>
</reference>
<reference key="2">
    <citation type="journal article" date="2003" name="Nat. Biotechnol.">
        <title>Complete genome sequence and comparative analysis of the industrial microorganism Streptomyces avermitilis.</title>
        <authorList>
            <person name="Ikeda H."/>
            <person name="Ishikawa J."/>
            <person name="Hanamoto A."/>
            <person name="Shinose M."/>
            <person name="Kikuchi H."/>
            <person name="Shiba T."/>
            <person name="Sakaki Y."/>
            <person name="Hattori M."/>
            <person name="Omura S."/>
        </authorList>
    </citation>
    <scope>NUCLEOTIDE SEQUENCE [LARGE SCALE GENOMIC DNA]</scope>
    <source>
        <strain>ATCC 31267 / DSM 46492 / JCM 5070 / NBRC 14893 / NCIMB 12804 / NRRL 8165 / MA-4680</strain>
    </source>
</reference>